<sequence>MKEQKRISESLITESLTNDMFWVCLENEDPILGYVSGRIRHSFIHILVKISVSCYDSTRTRRRIIYRLRNKDSND</sequence>
<geneLocation type="chloroplast"/>
<gene>
    <name type="primary">infA</name>
</gene>
<name>IF1C_CUCSA</name>
<keyword id="KW-0150">Chloroplast</keyword>
<keyword id="KW-0396">Initiation factor</keyword>
<keyword id="KW-0934">Plastid</keyword>
<keyword id="KW-0648">Protein biosynthesis</keyword>
<keyword id="KW-0694">RNA-binding</keyword>
<keyword id="KW-0699">rRNA-binding</keyword>
<feature type="chain" id="PRO_0000298914" description="Translation initiation factor IF-1, chloroplastic">
    <location>
        <begin position="1"/>
        <end position="75"/>
    </location>
</feature>
<comment type="function">
    <text evidence="1">One of the essential components for the initiation of protein synthesis. Stabilizes the binding of IF-2 and IF-3 on the 30S subunit to which N-formylmethionyl-tRNA(fMet) subsequently binds. Helps modulate mRNA selection, yielding the 30S pre-initiation complex (PIC). Upon addition of the 50S ribosomal subunit IF-1, IF-2 and IF-3 are released leaving the mature 70S translation initiation complex.</text>
</comment>
<comment type="subunit">
    <text evidence="1">Component of the 30S ribosomal translation pre-initiation complex which assembles on the 30S ribosome in the order IF-2 and IF-3, IF-1 and N-formylmethionyl-tRNA(fMet); mRNA recruitment can occur at any time during PIC assembly.</text>
</comment>
<comment type="subcellular location">
    <subcellularLocation>
        <location evidence="1">Plastid</location>
        <location evidence="1">Chloroplast</location>
    </subcellularLocation>
</comment>
<comment type="similarity">
    <text evidence="1">Belongs to the IF-1 family.</text>
</comment>
<comment type="caution">
    <text evidence="1">This is a pseudogene in 2 other cucumber chloroplast genomes (cv. Baekmibaekdadagi and Borszczagowski). In cv. Chipper and Gy14 there is a single base insertion that restores the reading frame.</text>
</comment>
<protein>
    <recommendedName>
        <fullName>Translation initiation factor IF-1, chloroplastic</fullName>
    </recommendedName>
</protein>
<proteinExistence type="inferred from homology"/>
<dbReference type="EMBL" id="DQ865975">
    <property type="protein sequence ID" value="ABI97451.1"/>
    <property type="molecule type" value="Genomic_DNA"/>
</dbReference>
<dbReference type="EMBL" id="DQ865976">
    <property type="protein sequence ID" value="ABI98780.1"/>
    <property type="molecule type" value="Genomic_DNA"/>
</dbReference>
<dbReference type="SMR" id="A5J1W9"/>
<dbReference type="GO" id="GO:0009507">
    <property type="term" value="C:chloroplast"/>
    <property type="evidence" value="ECO:0007669"/>
    <property type="project" value="UniProtKB-SubCell"/>
</dbReference>
<dbReference type="GO" id="GO:0019843">
    <property type="term" value="F:rRNA binding"/>
    <property type="evidence" value="ECO:0007669"/>
    <property type="project" value="UniProtKB-KW"/>
</dbReference>
<dbReference type="GO" id="GO:0003743">
    <property type="term" value="F:translation initiation factor activity"/>
    <property type="evidence" value="ECO:0007669"/>
    <property type="project" value="UniProtKB-KW"/>
</dbReference>
<dbReference type="Gene3D" id="2.40.50.140">
    <property type="entry name" value="Nucleic acid-binding proteins"/>
    <property type="match status" value="1"/>
</dbReference>
<dbReference type="InterPro" id="IPR012340">
    <property type="entry name" value="NA-bd_OB-fold"/>
</dbReference>
<dbReference type="InterPro" id="IPR004368">
    <property type="entry name" value="TIF_IF1"/>
</dbReference>
<dbReference type="NCBIfam" id="TIGR00008">
    <property type="entry name" value="infA"/>
    <property type="match status" value="1"/>
</dbReference>
<dbReference type="PANTHER" id="PTHR33370">
    <property type="entry name" value="TRANSLATION INITIATION FACTOR IF-1, CHLOROPLASTIC"/>
    <property type="match status" value="1"/>
</dbReference>
<dbReference type="PANTHER" id="PTHR33370:SF1">
    <property type="entry name" value="TRANSLATION INITIATION FACTOR IF-1, CHLOROPLASTIC"/>
    <property type="match status" value="1"/>
</dbReference>
<dbReference type="SUPFAM" id="SSF50249">
    <property type="entry name" value="Nucleic acid-binding proteins"/>
    <property type="match status" value="1"/>
</dbReference>
<reference key="1">
    <citation type="journal article" date="2007" name="Genome">
        <title>Sequencing cucumber (Cucumis sativus L.) chloroplast genomes identifies differences between chilling-tolerant and -susceptible cucumber lines.</title>
        <authorList>
            <person name="Chung S.-M."/>
            <person name="Gordon V.S."/>
            <person name="Staub J.E."/>
        </authorList>
    </citation>
    <scope>NUCLEOTIDE SEQUENCE [LARGE SCALE GENOMIC DNA]</scope>
    <scope>VARIANTS</scope>
    <source>
        <strain>cv. Chipper</strain>
        <strain>cv. Gy14</strain>
    </source>
</reference>
<evidence type="ECO:0000305" key="1"/>
<accession>A5J1W9</accession>
<organism>
    <name type="scientific">Cucumis sativus</name>
    <name type="common">Cucumber</name>
    <dbReference type="NCBI Taxonomy" id="3659"/>
    <lineage>
        <taxon>Eukaryota</taxon>
        <taxon>Viridiplantae</taxon>
        <taxon>Streptophyta</taxon>
        <taxon>Embryophyta</taxon>
        <taxon>Tracheophyta</taxon>
        <taxon>Spermatophyta</taxon>
        <taxon>Magnoliopsida</taxon>
        <taxon>eudicotyledons</taxon>
        <taxon>Gunneridae</taxon>
        <taxon>Pentapetalae</taxon>
        <taxon>rosids</taxon>
        <taxon>fabids</taxon>
        <taxon>Cucurbitales</taxon>
        <taxon>Cucurbitaceae</taxon>
        <taxon>Benincaseae</taxon>
        <taxon>Cucumis</taxon>
    </lineage>
</organism>